<name>NU1M_PHYEO</name>
<sequence>MYLITLLSTIVPILLAVAFLTLVERKILGYMQLRKGPNVVGPYGLLQPIADAVKLFTKEPLRPLTSSVSMFIIAPILALALALTMWTPLPMPHPLINMNLGILFMLAMSSLAVYAILWSGWASNSKYALIGALRAVAQTISYEVTLAIILLSILLMSGSYSLTTLITTQEYIWLILPSWPLTMMWFISTLAETNRAPFDLTEGESELVSGFNVEYAGGPFALFFLAEYANIIMMNALTTILFLGAYNNPMAPELYTTNFATKTLLLTMSFLWIRASYPRFRYDQLMHLLWKNFLPLTLALCMWYVTMPIMLASIPPQT</sequence>
<organism>
    <name type="scientific">Phyllostomus elongatus</name>
    <name type="common">Lesser spear-nosed bat</name>
    <dbReference type="NCBI Taxonomy" id="187005"/>
    <lineage>
        <taxon>Eukaryota</taxon>
        <taxon>Metazoa</taxon>
        <taxon>Chordata</taxon>
        <taxon>Craniata</taxon>
        <taxon>Vertebrata</taxon>
        <taxon>Euteleostomi</taxon>
        <taxon>Mammalia</taxon>
        <taxon>Eutheria</taxon>
        <taxon>Laurasiatheria</taxon>
        <taxon>Chiroptera</taxon>
        <taxon>Yangochiroptera</taxon>
        <taxon>Phyllostomidae</taxon>
        <taxon>Phyllostominae</taxon>
        <taxon>Phyllostomus</taxon>
    </lineage>
</organism>
<geneLocation type="mitochondrion"/>
<evidence type="ECO:0000250" key="1"/>
<evidence type="ECO:0000255" key="2"/>
<evidence type="ECO:0000305" key="3"/>
<accession>Q8M892</accession>
<comment type="function">
    <text evidence="1">Core subunit of the mitochondrial membrane respiratory chain NADH dehydrogenase (Complex I) that is believed to belong to the minimal assembly required for catalysis. Complex I functions in the transfer of electrons from NADH to the respiratory chain. The immediate electron acceptor for the enzyme is believed to be ubiquinone (By similarity).</text>
</comment>
<comment type="catalytic activity">
    <reaction>
        <text>a ubiquinone + NADH + 5 H(+)(in) = a ubiquinol + NAD(+) + 4 H(+)(out)</text>
        <dbReference type="Rhea" id="RHEA:29091"/>
        <dbReference type="Rhea" id="RHEA-COMP:9565"/>
        <dbReference type="Rhea" id="RHEA-COMP:9566"/>
        <dbReference type="ChEBI" id="CHEBI:15378"/>
        <dbReference type="ChEBI" id="CHEBI:16389"/>
        <dbReference type="ChEBI" id="CHEBI:17976"/>
        <dbReference type="ChEBI" id="CHEBI:57540"/>
        <dbReference type="ChEBI" id="CHEBI:57945"/>
        <dbReference type="EC" id="7.1.1.2"/>
    </reaction>
</comment>
<comment type="subcellular location">
    <subcellularLocation>
        <location evidence="1">Mitochondrion inner membrane</location>
        <topology evidence="1">Multi-pass membrane protein</topology>
    </subcellularLocation>
</comment>
<comment type="similarity">
    <text evidence="3">Belongs to the complex I subunit 1 family.</text>
</comment>
<keyword id="KW-0249">Electron transport</keyword>
<keyword id="KW-0472">Membrane</keyword>
<keyword id="KW-0496">Mitochondrion</keyword>
<keyword id="KW-0999">Mitochondrion inner membrane</keyword>
<keyword id="KW-0520">NAD</keyword>
<keyword id="KW-0679">Respiratory chain</keyword>
<keyword id="KW-1278">Translocase</keyword>
<keyword id="KW-0812">Transmembrane</keyword>
<keyword id="KW-1133">Transmembrane helix</keyword>
<keyword id="KW-0813">Transport</keyword>
<keyword id="KW-0830">Ubiquinone</keyword>
<feature type="chain" id="PRO_0000117455" description="NADH-ubiquinone oxidoreductase chain 1">
    <location>
        <begin position="1"/>
        <end position="318"/>
    </location>
</feature>
<feature type="transmembrane region" description="Helical" evidence="2">
    <location>
        <begin position="3"/>
        <end position="23"/>
    </location>
</feature>
<feature type="transmembrane region" description="Helical" evidence="2">
    <location>
        <begin position="70"/>
        <end position="90"/>
    </location>
</feature>
<feature type="transmembrane region" description="Helical" evidence="2">
    <location>
        <begin position="100"/>
        <end position="120"/>
    </location>
</feature>
<feature type="transmembrane region" description="Helical" evidence="2">
    <location>
        <begin position="146"/>
        <end position="166"/>
    </location>
</feature>
<feature type="transmembrane region" description="Helical" evidence="2">
    <location>
        <begin position="171"/>
        <end position="191"/>
    </location>
</feature>
<feature type="transmembrane region" description="Helical" evidence="2">
    <location>
        <begin position="222"/>
        <end position="242"/>
    </location>
</feature>
<feature type="transmembrane region" description="Helical" evidence="2">
    <location>
        <begin position="254"/>
        <end position="273"/>
    </location>
</feature>
<feature type="transmembrane region" description="Helical" evidence="2">
    <location>
        <begin position="294"/>
        <end position="314"/>
    </location>
</feature>
<dbReference type="EC" id="7.1.1.2"/>
<dbReference type="EMBL" id="AB079809">
    <property type="protein sequence ID" value="BAB92034.1"/>
    <property type="molecule type" value="Genomic_DNA"/>
</dbReference>
<dbReference type="SMR" id="Q8M892"/>
<dbReference type="GO" id="GO:0005743">
    <property type="term" value="C:mitochondrial inner membrane"/>
    <property type="evidence" value="ECO:0007669"/>
    <property type="project" value="UniProtKB-SubCell"/>
</dbReference>
<dbReference type="GO" id="GO:0008137">
    <property type="term" value="F:NADH dehydrogenase (ubiquinone) activity"/>
    <property type="evidence" value="ECO:0007669"/>
    <property type="project" value="UniProtKB-EC"/>
</dbReference>
<dbReference type="GO" id="GO:0009060">
    <property type="term" value="P:aerobic respiration"/>
    <property type="evidence" value="ECO:0007669"/>
    <property type="project" value="TreeGrafter"/>
</dbReference>
<dbReference type="HAMAP" id="MF_01350">
    <property type="entry name" value="NDH1_NuoH"/>
    <property type="match status" value="1"/>
</dbReference>
<dbReference type="InterPro" id="IPR001694">
    <property type="entry name" value="NADH_UbQ_OxRdtase_su1/FPO"/>
</dbReference>
<dbReference type="InterPro" id="IPR018086">
    <property type="entry name" value="NADH_UbQ_OxRdtase_su1_CS"/>
</dbReference>
<dbReference type="PANTHER" id="PTHR11432">
    <property type="entry name" value="NADH DEHYDROGENASE SUBUNIT 1"/>
    <property type="match status" value="1"/>
</dbReference>
<dbReference type="PANTHER" id="PTHR11432:SF3">
    <property type="entry name" value="NADH-UBIQUINONE OXIDOREDUCTASE CHAIN 1"/>
    <property type="match status" value="1"/>
</dbReference>
<dbReference type="Pfam" id="PF00146">
    <property type="entry name" value="NADHdh"/>
    <property type="match status" value="1"/>
</dbReference>
<dbReference type="PROSITE" id="PS00667">
    <property type="entry name" value="COMPLEX1_ND1_1"/>
    <property type="match status" value="1"/>
</dbReference>
<dbReference type="PROSITE" id="PS00668">
    <property type="entry name" value="COMPLEX1_ND1_2"/>
    <property type="match status" value="1"/>
</dbReference>
<gene>
    <name type="primary">MT-ND1</name>
    <name type="synonym">MTND1</name>
    <name type="synonym">NADH1</name>
    <name type="synonym">ND1</name>
</gene>
<reference key="1">
    <citation type="journal article" date="2002" name="J. Mol. Evol.">
        <title>Intra- and interfamily relationships of Vespertilionidae inferred by various molecular markers including SINE insertion data.</title>
        <authorList>
            <person name="Kawai K."/>
            <person name="Nikaido M."/>
            <person name="Harada M."/>
            <person name="Matsumura S."/>
            <person name="Lin L.K."/>
            <person name="Wu Y."/>
            <person name="Hasegawa M."/>
            <person name="Okada N."/>
        </authorList>
    </citation>
    <scope>NUCLEOTIDE SEQUENCE [GENOMIC DNA]</scope>
</reference>
<protein>
    <recommendedName>
        <fullName>NADH-ubiquinone oxidoreductase chain 1</fullName>
        <ecNumber>7.1.1.2</ecNumber>
    </recommendedName>
    <alternativeName>
        <fullName>NADH dehydrogenase subunit 1</fullName>
    </alternativeName>
</protein>
<proteinExistence type="inferred from homology"/>